<accession>P49167</accession>
<accession>D6VYW7</accession>
<protein>
    <recommendedName>
        <fullName evidence="5">Large ribosomal subunit protein eL38</fullName>
    </recommendedName>
    <alternativeName>
        <fullName evidence="6">60S ribosomal protein L38</fullName>
    </alternativeName>
</protein>
<gene>
    <name evidence="6" type="primary">RPL38</name>
    <name type="ordered locus">YLR325C</name>
    <name type="ORF">L8543.2</name>
</gene>
<comment type="function">
    <text evidence="8">Component of the ribosome, a large ribonucleoprotein complex responsible for the synthesis of proteins in the cell. The small ribosomal subunit (SSU) binds messenger RNAs (mRNAs) and translates the encoded message by selecting cognate aminoacyl-transfer RNA (tRNA) molecules. The large subunit (LSU) contains the ribosomal catalytic site termed the peptidyl transferase center (PTC), which catalyzes the formation of peptide bonds, thereby polymerizing the amino acids delivered by tRNAs into a polypeptide chain. The nascent polypeptides leave the ribosome through a tunnel in the LSU and interact with protein factors that function in enzymatic processing, targeting, and the membrane insertion of nascent chains at the exit of the ribosomal tunnel.</text>
</comment>
<comment type="subunit">
    <text evidence="4 9">Component of the large ribosomal subunit (LSU). Mature yeast ribosomes consist of a small (40S) and a large (60S) subunit. The 40S small subunit contains 1 molecule of ribosomal RNA (18S rRNA) and 33 different proteins (encoded by 57 genes). The large 60S subunit contains 3 rRNA molecules (25S, 5.8S and 5S rRNA) and 46 different proteins (encoded by 81 genes) (PubMed:22096102, PubMed:9559554).</text>
</comment>
<comment type="subcellular location">
    <subcellularLocation>
        <location evidence="2 4">Cytoplasm</location>
    </subcellularLocation>
</comment>
<comment type="miscellaneous">
    <text evidence="3">Present with 50200 molecules/cell in log phase SD medium.</text>
</comment>
<comment type="similarity">
    <text evidence="7">Belongs to the eukaryotic ribosomal protein eL38 family.</text>
</comment>
<sequence>MAREITDIKQFLELTRRADVKTATVKINKKLNKAGKPFRQTKFKVRGSSSLYTLVINDAGKAKKLIQSLPPTLKVNRL</sequence>
<proteinExistence type="evidence at protein level"/>
<dbReference type="EMBL" id="U20618">
    <property type="protein sequence ID" value="AAB64512.1"/>
    <property type="molecule type" value="Genomic_DNA"/>
</dbReference>
<dbReference type="EMBL" id="BK006945">
    <property type="protein sequence ID" value="DAA09633.1"/>
    <property type="molecule type" value="Genomic_DNA"/>
</dbReference>
<dbReference type="PIR" id="S53402">
    <property type="entry name" value="S53402"/>
</dbReference>
<dbReference type="RefSeq" id="NP_013429.1">
    <property type="nucleotide sequence ID" value="NM_001182214.1"/>
</dbReference>
<dbReference type="PDB" id="3J6X">
    <property type="method" value="EM"/>
    <property type="resolution" value="6.10 A"/>
    <property type="chains" value="78=1-78"/>
</dbReference>
<dbReference type="PDB" id="3J6Y">
    <property type="method" value="EM"/>
    <property type="resolution" value="6.10 A"/>
    <property type="chains" value="78=1-78"/>
</dbReference>
<dbReference type="PDB" id="3J77">
    <property type="method" value="EM"/>
    <property type="resolution" value="6.20 A"/>
    <property type="chains" value="88=1-78"/>
</dbReference>
<dbReference type="PDB" id="3J78">
    <property type="method" value="EM"/>
    <property type="resolution" value="6.30 A"/>
    <property type="chains" value="88=1-78"/>
</dbReference>
<dbReference type="PDB" id="3JCT">
    <property type="method" value="EM"/>
    <property type="resolution" value="3.08 A"/>
    <property type="chains" value="k=1-78"/>
</dbReference>
<dbReference type="PDB" id="4U3M">
    <property type="method" value="X-ray"/>
    <property type="resolution" value="3.00 A"/>
    <property type="chains" value="O8/o8=2-78"/>
</dbReference>
<dbReference type="PDB" id="4U3N">
    <property type="method" value="X-ray"/>
    <property type="resolution" value="3.20 A"/>
    <property type="chains" value="O8/o8=2-78"/>
</dbReference>
<dbReference type="PDB" id="4U3U">
    <property type="method" value="X-ray"/>
    <property type="resolution" value="2.90 A"/>
    <property type="chains" value="O8/o8=2-78"/>
</dbReference>
<dbReference type="PDB" id="4U4N">
    <property type="method" value="X-ray"/>
    <property type="resolution" value="3.10 A"/>
    <property type="chains" value="O8/o8=2-78"/>
</dbReference>
<dbReference type="PDB" id="4U4O">
    <property type="method" value="X-ray"/>
    <property type="resolution" value="3.60 A"/>
    <property type="chains" value="O8/o8=2-78"/>
</dbReference>
<dbReference type="PDB" id="4U4Q">
    <property type="method" value="X-ray"/>
    <property type="resolution" value="3.00 A"/>
    <property type="chains" value="O8/o8=2-78"/>
</dbReference>
<dbReference type="PDB" id="4U4R">
    <property type="method" value="X-ray"/>
    <property type="resolution" value="2.80 A"/>
    <property type="chains" value="O8/o8=2-78"/>
</dbReference>
<dbReference type="PDB" id="4U4U">
    <property type="method" value="X-ray"/>
    <property type="resolution" value="3.00 A"/>
    <property type="chains" value="O8/o8=2-78"/>
</dbReference>
<dbReference type="PDB" id="4U4Y">
    <property type="method" value="X-ray"/>
    <property type="resolution" value="3.20 A"/>
    <property type="chains" value="O8/o8=2-78"/>
</dbReference>
<dbReference type="PDB" id="4U4Z">
    <property type="method" value="X-ray"/>
    <property type="resolution" value="3.10 A"/>
    <property type="chains" value="O8/o8=2-78"/>
</dbReference>
<dbReference type="PDB" id="4U50">
    <property type="method" value="X-ray"/>
    <property type="resolution" value="3.20 A"/>
    <property type="chains" value="O8/o8=2-78"/>
</dbReference>
<dbReference type="PDB" id="4U51">
    <property type="method" value="X-ray"/>
    <property type="resolution" value="3.20 A"/>
    <property type="chains" value="O8/o8=2-78"/>
</dbReference>
<dbReference type="PDB" id="4U52">
    <property type="method" value="X-ray"/>
    <property type="resolution" value="3.00 A"/>
    <property type="chains" value="O8/o8=2-78"/>
</dbReference>
<dbReference type="PDB" id="4U53">
    <property type="method" value="X-ray"/>
    <property type="resolution" value="3.30 A"/>
    <property type="chains" value="O8/o8=2-78"/>
</dbReference>
<dbReference type="PDB" id="4U55">
    <property type="method" value="X-ray"/>
    <property type="resolution" value="3.20 A"/>
    <property type="chains" value="O8/o8=2-78"/>
</dbReference>
<dbReference type="PDB" id="4U56">
    <property type="method" value="X-ray"/>
    <property type="resolution" value="3.45 A"/>
    <property type="chains" value="O8/o8=2-78"/>
</dbReference>
<dbReference type="PDB" id="4U6F">
    <property type="method" value="X-ray"/>
    <property type="resolution" value="3.10 A"/>
    <property type="chains" value="O8/o8=2-78"/>
</dbReference>
<dbReference type="PDB" id="4V6I">
    <property type="method" value="EM"/>
    <property type="resolution" value="8.80 A"/>
    <property type="chains" value="Bn=1-78"/>
</dbReference>
<dbReference type="PDB" id="4V7F">
    <property type="method" value="EM"/>
    <property type="resolution" value="8.70 A"/>
    <property type="chains" value="i=1-78"/>
</dbReference>
<dbReference type="PDB" id="4V88">
    <property type="method" value="X-ray"/>
    <property type="resolution" value="3.00 A"/>
    <property type="chains" value="Bk/Dk=1-78"/>
</dbReference>
<dbReference type="PDB" id="4V8T">
    <property type="method" value="EM"/>
    <property type="resolution" value="8.10 A"/>
    <property type="chains" value="k=1-78"/>
</dbReference>
<dbReference type="PDB" id="4V8Y">
    <property type="method" value="EM"/>
    <property type="resolution" value="4.30 A"/>
    <property type="chains" value="Bk=2-78"/>
</dbReference>
<dbReference type="PDB" id="4V8Z">
    <property type="method" value="EM"/>
    <property type="resolution" value="6.60 A"/>
    <property type="chains" value="Bk=2-78"/>
</dbReference>
<dbReference type="PDB" id="4V91">
    <property type="method" value="EM"/>
    <property type="resolution" value="3.70 A"/>
    <property type="chains" value="k=1-78"/>
</dbReference>
<dbReference type="PDB" id="5APN">
    <property type="method" value="EM"/>
    <property type="resolution" value="3.91 A"/>
    <property type="chains" value="k=1-78"/>
</dbReference>
<dbReference type="PDB" id="5APO">
    <property type="method" value="EM"/>
    <property type="resolution" value="3.41 A"/>
    <property type="chains" value="k=1-78"/>
</dbReference>
<dbReference type="PDB" id="5DAT">
    <property type="method" value="X-ray"/>
    <property type="resolution" value="3.15 A"/>
    <property type="chains" value="O8/o8=2-78"/>
</dbReference>
<dbReference type="PDB" id="5DC3">
    <property type="method" value="X-ray"/>
    <property type="resolution" value="3.25 A"/>
    <property type="chains" value="O8/o8=2-78"/>
</dbReference>
<dbReference type="PDB" id="5DGE">
    <property type="method" value="X-ray"/>
    <property type="resolution" value="3.45 A"/>
    <property type="chains" value="O8/o8=2-78"/>
</dbReference>
<dbReference type="PDB" id="5DGF">
    <property type="method" value="X-ray"/>
    <property type="resolution" value="3.30 A"/>
    <property type="chains" value="O8/o8=2-78"/>
</dbReference>
<dbReference type="PDB" id="5DGV">
    <property type="method" value="X-ray"/>
    <property type="resolution" value="3.10 A"/>
    <property type="chains" value="O8/o8=2-78"/>
</dbReference>
<dbReference type="PDB" id="5FCI">
    <property type="method" value="X-ray"/>
    <property type="resolution" value="3.40 A"/>
    <property type="chains" value="O8/o8=2-78"/>
</dbReference>
<dbReference type="PDB" id="5FCJ">
    <property type="method" value="X-ray"/>
    <property type="resolution" value="3.10 A"/>
    <property type="chains" value="O8/o8=2-78"/>
</dbReference>
<dbReference type="PDB" id="5GAK">
    <property type="method" value="EM"/>
    <property type="resolution" value="3.88 A"/>
    <property type="chains" value="m=1-78"/>
</dbReference>
<dbReference type="PDB" id="5H4P">
    <property type="method" value="EM"/>
    <property type="resolution" value="3.07 A"/>
    <property type="chains" value="k=1-78"/>
</dbReference>
<dbReference type="PDB" id="5I4L">
    <property type="method" value="X-ray"/>
    <property type="resolution" value="3.10 A"/>
    <property type="chains" value="O8/o8=2-78"/>
</dbReference>
<dbReference type="PDB" id="5JCS">
    <property type="method" value="EM"/>
    <property type="resolution" value="9.50 A"/>
    <property type="chains" value="k=1-78"/>
</dbReference>
<dbReference type="PDB" id="5JUO">
    <property type="method" value="EM"/>
    <property type="resolution" value="4.00 A"/>
    <property type="chains" value="PA=1-78"/>
</dbReference>
<dbReference type="PDB" id="5JUP">
    <property type="method" value="EM"/>
    <property type="resolution" value="3.50 A"/>
    <property type="chains" value="PA=1-78"/>
</dbReference>
<dbReference type="PDB" id="5JUS">
    <property type="method" value="EM"/>
    <property type="resolution" value="4.20 A"/>
    <property type="chains" value="PA=1-78"/>
</dbReference>
<dbReference type="PDB" id="5JUT">
    <property type="method" value="EM"/>
    <property type="resolution" value="4.00 A"/>
    <property type="chains" value="PA=1-78"/>
</dbReference>
<dbReference type="PDB" id="5JUU">
    <property type="method" value="EM"/>
    <property type="resolution" value="4.00 A"/>
    <property type="chains" value="PA=1-78"/>
</dbReference>
<dbReference type="PDB" id="5LYB">
    <property type="method" value="X-ray"/>
    <property type="resolution" value="3.25 A"/>
    <property type="chains" value="O8/o8=2-78"/>
</dbReference>
<dbReference type="PDB" id="5M1J">
    <property type="method" value="EM"/>
    <property type="resolution" value="3.30 A"/>
    <property type="chains" value="k5=2-78"/>
</dbReference>
<dbReference type="PDB" id="5MC6">
    <property type="method" value="EM"/>
    <property type="resolution" value="3.80 A"/>
    <property type="chains" value="AI=1-78"/>
</dbReference>
<dbReference type="PDB" id="5MEI">
    <property type="method" value="X-ray"/>
    <property type="resolution" value="3.50 A"/>
    <property type="chains" value="AL/DM=2-78"/>
</dbReference>
<dbReference type="PDB" id="5NDG">
    <property type="method" value="X-ray"/>
    <property type="resolution" value="3.70 A"/>
    <property type="chains" value="O8/o8=2-78"/>
</dbReference>
<dbReference type="PDB" id="5NDV">
    <property type="method" value="X-ray"/>
    <property type="resolution" value="3.30 A"/>
    <property type="chains" value="O8/o8=2-78"/>
</dbReference>
<dbReference type="PDB" id="5NDW">
    <property type="method" value="X-ray"/>
    <property type="resolution" value="3.70 A"/>
    <property type="chains" value="O8/o8=2-78"/>
</dbReference>
<dbReference type="PDB" id="5OBM">
    <property type="method" value="X-ray"/>
    <property type="resolution" value="3.40 A"/>
    <property type="chains" value="O8/o8=2-78"/>
</dbReference>
<dbReference type="PDB" id="5ON6">
    <property type="method" value="X-ray"/>
    <property type="resolution" value="3.10 A"/>
    <property type="chains" value="AL/DM=2-78"/>
</dbReference>
<dbReference type="PDB" id="5T62">
    <property type="method" value="EM"/>
    <property type="resolution" value="3.30 A"/>
    <property type="chains" value="x=1-78"/>
</dbReference>
<dbReference type="PDB" id="5T6R">
    <property type="method" value="EM"/>
    <property type="resolution" value="4.50 A"/>
    <property type="chains" value="x=1-78"/>
</dbReference>
<dbReference type="PDB" id="5TBW">
    <property type="method" value="X-ray"/>
    <property type="resolution" value="3.00 A"/>
    <property type="chains" value="AL/DM=2-78"/>
</dbReference>
<dbReference type="PDB" id="5TGA">
    <property type="method" value="X-ray"/>
    <property type="resolution" value="3.30 A"/>
    <property type="chains" value="O8/o8=2-78"/>
</dbReference>
<dbReference type="PDB" id="5TGM">
    <property type="method" value="X-ray"/>
    <property type="resolution" value="3.50 A"/>
    <property type="chains" value="O8/o8=2-78"/>
</dbReference>
<dbReference type="PDB" id="6CB1">
    <property type="method" value="EM"/>
    <property type="resolution" value="4.60 A"/>
    <property type="chains" value="k=1-78"/>
</dbReference>
<dbReference type="PDB" id="6ELZ">
    <property type="method" value="EM"/>
    <property type="resolution" value="3.30 A"/>
    <property type="chains" value="k=1-78"/>
</dbReference>
<dbReference type="PDB" id="6EM5">
    <property type="method" value="EM"/>
    <property type="resolution" value="4.30 A"/>
    <property type="chains" value="k=1-78"/>
</dbReference>
<dbReference type="PDB" id="6FT6">
    <property type="method" value="EM"/>
    <property type="resolution" value="3.90 A"/>
    <property type="chains" value="k=1-78"/>
</dbReference>
<dbReference type="PDB" id="6GQ1">
    <property type="method" value="EM"/>
    <property type="resolution" value="4.40 A"/>
    <property type="chains" value="k=2-78"/>
</dbReference>
<dbReference type="PDB" id="6GQB">
    <property type="method" value="EM"/>
    <property type="resolution" value="3.90 A"/>
    <property type="chains" value="k=2-78"/>
</dbReference>
<dbReference type="PDB" id="6GQV">
    <property type="method" value="EM"/>
    <property type="resolution" value="4.00 A"/>
    <property type="chains" value="k=2-78"/>
</dbReference>
<dbReference type="PDB" id="6HD7">
    <property type="method" value="EM"/>
    <property type="resolution" value="3.40 A"/>
    <property type="chains" value="m=1-78"/>
</dbReference>
<dbReference type="PDB" id="6HHQ">
    <property type="method" value="X-ray"/>
    <property type="resolution" value="3.10 A"/>
    <property type="chains" value="AL/DM=1-78"/>
</dbReference>
<dbReference type="PDB" id="6I7O">
    <property type="method" value="EM"/>
    <property type="resolution" value="5.30 A"/>
    <property type="chains" value="AI/XI=2-78"/>
</dbReference>
<dbReference type="PDB" id="6M62">
    <property type="method" value="EM"/>
    <property type="resolution" value="3.20 A"/>
    <property type="chains" value="k=1-78"/>
</dbReference>
<dbReference type="PDB" id="6N8J">
    <property type="method" value="EM"/>
    <property type="resolution" value="3.50 A"/>
    <property type="chains" value="k=1-78"/>
</dbReference>
<dbReference type="PDB" id="6N8K">
    <property type="method" value="EM"/>
    <property type="resolution" value="3.60 A"/>
    <property type="chains" value="k=1-78"/>
</dbReference>
<dbReference type="PDB" id="6N8L">
    <property type="method" value="EM"/>
    <property type="resolution" value="3.60 A"/>
    <property type="chains" value="k=1-78"/>
</dbReference>
<dbReference type="PDB" id="6N8M">
    <property type="method" value="EM"/>
    <property type="resolution" value="3.50 A"/>
    <property type="chains" value="x=1-78"/>
</dbReference>
<dbReference type="PDB" id="6N8N">
    <property type="method" value="EM"/>
    <property type="resolution" value="3.80 A"/>
    <property type="chains" value="x=1-78"/>
</dbReference>
<dbReference type="PDB" id="6N8O">
    <property type="method" value="EM"/>
    <property type="resolution" value="3.50 A"/>
    <property type="chains" value="x=1-78"/>
</dbReference>
<dbReference type="PDB" id="6OIG">
    <property type="method" value="EM"/>
    <property type="resolution" value="3.80 A"/>
    <property type="chains" value="k=2-78"/>
</dbReference>
<dbReference type="PDB" id="6Q8Y">
    <property type="method" value="EM"/>
    <property type="resolution" value="3.10 A"/>
    <property type="chains" value="AI=2-78"/>
</dbReference>
<dbReference type="PDB" id="6QIK">
    <property type="method" value="EM"/>
    <property type="resolution" value="3.10 A"/>
    <property type="chains" value="j=1-78"/>
</dbReference>
<dbReference type="PDB" id="6QT0">
    <property type="method" value="EM"/>
    <property type="resolution" value="3.40 A"/>
    <property type="chains" value="j=1-78"/>
</dbReference>
<dbReference type="PDB" id="6QTZ">
    <property type="method" value="EM"/>
    <property type="resolution" value="3.50 A"/>
    <property type="chains" value="j=1-78"/>
</dbReference>
<dbReference type="PDB" id="6R84">
    <property type="method" value="EM"/>
    <property type="resolution" value="3.60 A"/>
    <property type="chains" value="m=2-78"/>
</dbReference>
<dbReference type="PDB" id="6R86">
    <property type="method" value="EM"/>
    <property type="resolution" value="3.40 A"/>
    <property type="chains" value="m=2-78"/>
</dbReference>
<dbReference type="PDB" id="6R87">
    <property type="method" value="EM"/>
    <property type="resolution" value="3.40 A"/>
    <property type="chains" value="m=2-78"/>
</dbReference>
<dbReference type="PDB" id="6RI5">
    <property type="method" value="EM"/>
    <property type="resolution" value="3.30 A"/>
    <property type="chains" value="j=1-78"/>
</dbReference>
<dbReference type="PDB" id="6RZZ">
    <property type="method" value="EM"/>
    <property type="resolution" value="3.20 A"/>
    <property type="chains" value="j=1-78"/>
</dbReference>
<dbReference type="PDB" id="6S05">
    <property type="method" value="EM"/>
    <property type="resolution" value="3.90 A"/>
    <property type="chains" value="j=1-78"/>
</dbReference>
<dbReference type="PDB" id="6S47">
    <property type="method" value="EM"/>
    <property type="resolution" value="3.28 A"/>
    <property type="chains" value="Am=2-78"/>
</dbReference>
<dbReference type="PDB" id="6SNT">
    <property type="method" value="EM"/>
    <property type="resolution" value="2.80 A"/>
    <property type="chains" value="af=1-78"/>
</dbReference>
<dbReference type="PDB" id="6SV4">
    <property type="method" value="EM"/>
    <property type="resolution" value="3.30 A"/>
    <property type="chains" value="AI/XI/zI=1-78"/>
</dbReference>
<dbReference type="PDB" id="6T4Q">
    <property type="method" value="EM"/>
    <property type="resolution" value="2.60 A"/>
    <property type="chains" value="Lk=2-78"/>
</dbReference>
<dbReference type="PDB" id="6T7I">
    <property type="method" value="EM"/>
    <property type="resolution" value="3.20 A"/>
    <property type="chains" value="Lk=1-78"/>
</dbReference>
<dbReference type="PDB" id="6T7T">
    <property type="method" value="EM"/>
    <property type="resolution" value="3.10 A"/>
    <property type="chains" value="Lk=1-78"/>
</dbReference>
<dbReference type="PDB" id="6T83">
    <property type="method" value="EM"/>
    <property type="resolution" value="4.00 A"/>
    <property type="chains" value="V/kb=1-78"/>
</dbReference>
<dbReference type="PDB" id="6TB3">
    <property type="method" value="EM"/>
    <property type="resolution" value="2.80 A"/>
    <property type="chains" value="AI=2-78"/>
</dbReference>
<dbReference type="PDB" id="6TNU">
    <property type="method" value="EM"/>
    <property type="resolution" value="3.10 A"/>
    <property type="chains" value="AI=2-78"/>
</dbReference>
<dbReference type="PDB" id="6WOO">
    <property type="method" value="EM"/>
    <property type="resolution" value="2.90 A"/>
    <property type="chains" value="k=3-78"/>
</dbReference>
<dbReference type="PDB" id="6YLG">
    <property type="method" value="EM"/>
    <property type="resolution" value="3.00 A"/>
    <property type="chains" value="k=1-78"/>
</dbReference>
<dbReference type="PDB" id="6YLH">
    <property type="method" value="EM"/>
    <property type="resolution" value="3.10 A"/>
    <property type="chains" value="k=1-78"/>
</dbReference>
<dbReference type="PDB" id="6YLX">
    <property type="method" value="EM"/>
    <property type="resolution" value="3.90 A"/>
    <property type="chains" value="k=1-78"/>
</dbReference>
<dbReference type="PDB" id="6YLY">
    <property type="method" value="EM"/>
    <property type="resolution" value="3.80 A"/>
    <property type="chains" value="k=1-78"/>
</dbReference>
<dbReference type="PDB" id="6Z6J">
    <property type="method" value="EM"/>
    <property type="resolution" value="3.40 A"/>
    <property type="chains" value="Lk=1-78"/>
</dbReference>
<dbReference type="PDB" id="6Z6K">
    <property type="method" value="EM"/>
    <property type="resolution" value="3.40 A"/>
    <property type="chains" value="Lk=1-78"/>
</dbReference>
<dbReference type="PDB" id="7AZY">
    <property type="method" value="EM"/>
    <property type="resolution" value="2.88 A"/>
    <property type="chains" value="j=1-78"/>
</dbReference>
<dbReference type="PDB" id="7B7D">
    <property type="method" value="EM"/>
    <property type="resolution" value="3.30 A"/>
    <property type="chains" value="Lg=2-78"/>
</dbReference>
<dbReference type="PDB" id="7BT6">
    <property type="method" value="EM"/>
    <property type="resolution" value="3.12 A"/>
    <property type="chains" value="k=1-78"/>
</dbReference>
<dbReference type="PDB" id="7BTB">
    <property type="method" value="EM"/>
    <property type="resolution" value="3.22 A"/>
    <property type="chains" value="k=1-78"/>
</dbReference>
<dbReference type="PDB" id="7MPI">
    <property type="method" value="EM"/>
    <property type="resolution" value="3.05 A"/>
    <property type="chains" value="Ak=2-78"/>
</dbReference>
<dbReference type="PDB" id="7MPJ">
    <property type="method" value="EM"/>
    <property type="resolution" value="2.70 A"/>
    <property type="chains" value="Ak=2-78"/>
</dbReference>
<dbReference type="PDB" id="7N8B">
    <property type="method" value="EM"/>
    <property type="resolution" value="3.05 A"/>
    <property type="chains" value="Ak=2-78"/>
</dbReference>
<dbReference type="PDB" id="7NAC">
    <property type="method" value="EM"/>
    <property type="resolution" value="3.04 A"/>
    <property type="chains" value="k=1-78"/>
</dbReference>
<dbReference type="PDB" id="7NAD">
    <property type="method" value="EM"/>
    <property type="resolution" value="3.04 A"/>
    <property type="chains" value="k=1-78"/>
</dbReference>
<dbReference type="PDB" id="7NRC">
    <property type="method" value="EM"/>
    <property type="resolution" value="3.90 A"/>
    <property type="chains" value="Lm=2-78"/>
</dbReference>
<dbReference type="PDB" id="7NRD">
    <property type="method" value="EM"/>
    <property type="resolution" value="4.36 A"/>
    <property type="chains" value="Lm=2-78"/>
</dbReference>
<dbReference type="PDB" id="7OF1">
    <property type="method" value="EM"/>
    <property type="resolution" value="3.10 A"/>
    <property type="chains" value="k=1-78"/>
</dbReference>
<dbReference type="PDB" id="7OH3">
    <property type="method" value="EM"/>
    <property type="resolution" value="3.40 A"/>
    <property type="chains" value="k=1-78"/>
</dbReference>
<dbReference type="PDB" id="7OHQ">
    <property type="method" value="EM"/>
    <property type="resolution" value="3.10 A"/>
    <property type="chains" value="k=1-78"/>
</dbReference>
<dbReference type="PDB" id="7OHR">
    <property type="method" value="EM"/>
    <property type="resolution" value="4.72 A"/>
    <property type="chains" value="k=1-78"/>
</dbReference>
<dbReference type="PDB" id="7OHV">
    <property type="method" value="EM"/>
    <property type="resolution" value="3.90 A"/>
    <property type="chains" value="k=1-78"/>
</dbReference>
<dbReference type="PDB" id="7R72">
    <property type="method" value="EM"/>
    <property type="resolution" value="3.07 A"/>
    <property type="chains" value="k=1-78"/>
</dbReference>
<dbReference type="PDB" id="7R7A">
    <property type="method" value="EM"/>
    <property type="resolution" value="3.04 A"/>
    <property type="chains" value="k=1-78"/>
</dbReference>
<dbReference type="PDB" id="7U0H">
    <property type="method" value="EM"/>
    <property type="resolution" value="2.76 A"/>
    <property type="chains" value="k=1-78"/>
</dbReference>
<dbReference type="PDB" id="7UG6">
    <property type="method" value="EM"/>
    <property type="resolution" value="2.90 A"/>
    <property type="chains" value="k=1-78"/>
</dbReference>
<dbReference type="PDB" id="7UOO">
    <property type="method" value="EM"/>
    <property type="resolution" value="2.34 A"/>
    <property type="chains" value="k=1-78"/>
</dbReference>
<dbReference type="PDB" id="7UQB">
    <property type="method" value="EM"/>
    <property type="resolution" value="2.43 A"/>
    <property type="chains" value="k=1-78"/>
</dbReference>
<dbReference type="PDB" id="7UQZ">
    <property type="method" value="EM"/>
    <property type="resolution" value="2.44 A"/>
    <property type="chains" value="k=1-78"/>
</dbReference>
<dbReference type="PDB" id="7V08">
    <property type="method" value="EM"/>
    <property type="resolution" value="2.36 A"/>
    <property type="chains" value="k=1-78"/>
</dbReference>
<dbReference type="PDB" id="7Z34">
    <property type="method" value="EM"/>
    <property type="resolution" value="3.80 A"/>
    <property type="chains" value="k=1-78"/>
</dbReference>
<dbReference type="PDB" id="7ZPQ">
    <property type="method" value="EM"/>
    <property type="resolution" value="3.47 A"/>
    <property type="chains" value="Bj=2-78"/>
</dbReference>
<dbReference type="PDB" id="7ZRS">
    <property type="method" value="EM"/>
    <property type="resolution" value="4.80 A"/>
    <property type="chains" value="Bj=2-78"/>
</dbReference>
<dbReference type="PDB" id="7ZS5">
    <property type="method" value="EM"/>
    <property type="resolution" value="3.20 A"/>
    <property type="chains" value="Bl=2-78"/>
</dbReference>
<dbReference type="PDB" id="7ZUW">
    <property type="method" value="EM"/>
    <property type="resolution" value="4.30 A"/>
    <property type="chains" value="Bj=2-78"/>
</dbReference>
<dbReference type="PDB" id="7ZUX">
    <property type="method" value="EM"/>
    <property type="resolution" value="2.50 A"/>
    <property type="chains" value="Ej=2-78"/>
</dbReference>
<dbReference type="PDB" id="7ZW0">
    <property type="method" value="EM"/>
    <property type="resolution" value="2.40 A"/>
    <property type="chains" value="Ln=1-78"/>
</dbReference>
<dbReference type="PDB" id="8AAF">
    <property type="method" value="EM"/>
    <property type="resolution" value="2.50 A"/>
    <property type="chains" value="X=1-78"/>
</dbReference>
<dbReference type="PDB" id="8AGT">
    <property type="method" value="EM"/>
    <property type="resolution" value="2.60 A"/>
    <property type="chains" value="X=1-78"/>
</dbReference>
<dbReference type="PDB" id="8AGU">
    <property type="method" value="EM"/>
    <property type="resolution" value="2.70 A"/>
    <property type="chains" value="X=1-78"/>
</dbReference>
<dbReference type="PDB" id="8AGV">
    <property type="method" value="EM"/>
    <property type="resolution" value="2.60 A"/>
    <property type="chains" value="X=1-78"/>
</dbReference>
<dbReference type="PDB" id="8AGW">
    <property type="method" value="EM"/>
    <property type="resolution" value="2.60 A"/>
    <property type="chains" value="X=1-78"/>
</dbReference>
<dbReference type="PDB" id="8AGX">
    <property type="method" value="EM"/>
    <property type="resolution" value="2.40 A"/>
    <property type="chains" value="X=1-78"/>
</dbReference>
<dbReference type="PDB" id="8AGZ">
    <property type="method" value="EM"/>
    <property type="resolution" value="2.60 A"/>
    <property type="chains" value="X=1-78"/>
</dbReference>
<dbReference type="PDB" id="8BIP">
    <property type="method" value="EM"/>
    <property type="resolution" value="3.10 A"/>
    <property type="chains" value="Lk=2-78"/>
</dbReference>
<dbReference type="PDB" id="8BJQ">
    <property type="method" value="EM"/>
    <property type="resolution" value="3.80 A"/>
    <property type="chains" value="Lk=2-78"/>
</dbReference>
<dbReference type="PDB" id="8BN3">
    <property type="method" value="EM"/>
    <property type="resolution" value="2.40 A"/>
    <property type="chains" value="O8=2-78"/>
</dbReference>
<dbReference type="PDB" id="8BQD">
    <property type="method" value="EM"/>
    <property type="resolution" value="3.90 A"/>
    <property type="chains" value="AI=2-78"/>
</dbReference>
<dbReference type="PDB" id="8BQX">
    <property type="method" value="EM"/>
    <property type="resolution" value="3.80 A"/>
    <property type="chains" value="AI=2-78"/>
</dbReference>
<dbReference type="PDB" id="8CCS">
    <property type="method" value="EM"/>
    <property type="resolution" value="1.97 A"/>
    <property type="chains" value="W=1-78"/>
</dbReference>
<dbReference type="PDB" id="8CDL">
    <property type="method" value="EM"/>
    <property type="resolution" value="2.72 A"/>
    <property type="chains" value="W=1-78"/>
</dbReference>
<dbReference type="PDB" id="8CDR">
    <property type="method" value="EM"/>
    <property type="resolution" value="2.04 A"/>
    <property type="chains" value="W=1-78"/>
</dbReference>
<dbReference type="PDB" id="8CEH">
    <property type="method" value="EM"/>
    <property type="resolution" value="2.05 A"/>
    <property type="chains" value="W=1-78"/>
</dbReference>
<dbReference type="PDB" id="8CF5">
    <property type="method" value="EM"/>
    <property type="resolution" value="2.71 A"/>
    <property type="chains" value="W=1-78"/>
</dbReference>
<dbReference type="PDB" id="8CG8">
    <property type="method" value="EM"/>
    <property type="resolution" value="2.57 A"/>
    <property type="chains" value="W=1-78"/>
</dbReference>
<dbReference type="PDB" id="8CGN">
    <property type="method" value="EM"/>
    <property type="resolution" value="2.28 A"/>
    <property type="chains" value="W=1-78"/>
</dbReference>
<dbReference type="PDB" id="8CIV">
    <property type="method" value="EM"/>
    <property type="resolution" value="2.47 A"/>
    <property type="chains" value="W=1-78"/>
</dbReference>
<dbReference type="PDB" id="8CKU">
    <property type="method" value="EM"/>
    <property type="resolution" value="3.11 A"/>
    <property type="chains" value="W=1-78"/>
</dbReference>
<dbReference type="PDB" id="8CMJ">
    <property type="method" value="EM"/>
    <property type="resolution" value="3.79 A"/>
    <property type="chains" value="W=1-78"/>
</dbReference>
<dbReference type="PDB" id="8HFR">
    <property type="method" value="EM"/>
    <property type="resolution" value="2.64 A"/>
    <property type="chains" value="kr=1-78"/>
</dbReference>
<dbReference type="PDB" id="8K2D">
    <property type="method" value="EM"/>
    <property type="resolution" value="3.20 A"/>
    <property type="chains" value="Lk=1-78"/>
</dbReference>
<dbReference type="PDB" id="8K82">
    <property type="method" value="EM"/>
    <property type="resolution" value="3.00 A"/>
    <property type="chains" value="Lk=1-78"/>
</dbReference>
<dbReference type="PDB" id="8P4V">
    <property type="method" value="X-ray"/>
    <property type="resolution" value="3.16 A"/>
    <property type="chains" value="AL/DM=1-78"/>
</dbReference>
<dbReference type="PDB" id="8P8M">
    <property type="method" value="EM"/>
    <property type="resolution" value="2.66 A"/>
    <property type="chains" value="RM=1-78"/>
</dbReference>
<dbReference type="PDB" id="8P8N">
    <property type="method" value="EM"/>
    <property type="resolution" value="2.15 A"/>
    <property type="chains" value="RM=1-78"/>
</dbReference>
<dbReference type="PDB" id="8P8U">
    <property type="method" value="EM"/>
    <property type="resolution" value="2.23 A"/>
    <property type="chains" value="RM=1-78"/>
</dbReference>
<dbReference type="PDB" id="8P9A">
    <property type="method" value="X-ray"/>
    <property type="resolution" value="2.90 A"/>
    <property type="chains" value="AL/DM=1-78"/>
</dbReference>
<dbReference type="PDB" id="8PFR">
    <property type="method" value="EM"/>
    <property type="resolution" value="2.15 A"/>
    <property type="chains" value="RM=1-78"/>
</dbReference>
<dbReference type="PDB" id="8T2X">
    <property type="method" value="EM"/>
    <property type="resolution" value="2.46 A"/>
    <property type="chains" value="Ak=1-78"/>
</dbReference>
<dbReference type="PDB" id="8T2Y">
    <property type="method" value="EM"/>
    <property type="resolution" value="2.20 A"/>
    <property type="chains" value="Ak=1-78"/>
</dbReference>
<dbReference type="PDB" id="8T2Z">
    <property type="method" value="EM"/>
    <property type="resolution" value="2.40 A"/>
    <property type="chains" value="Ak=1-78"/>
</dbReference>
<dbReference type="PDB" id="8T30">
    <property type="method" value="EM"/>
    <property type="resolution" value="2.88 A"/>
    <property type="chains" value="Ak=1-78"/>
</dbReference>
<dbReference type="PDB" id="8T3A">
    <property type="method" value="EM"/>
    <property type="resolution" value="2.86 A"/>
    <property type="chains" value="Ak=1-78"/>
</dbReference>
<dbReference type="PDB" id="8T3B">
    <property type="method" value="EM"/>
    <property type="resolution" value="3.08 A"/>
    <property type="chains" value="Ak=1-78"/>
</dbReference>
<dbReference type="PDB" id="8T3C">
    <property type="method" value="EM"/>
    <property type="resolution" value="3.86 A"/>
    <property type="chains" value="Ak=1-78"/>
</dbReference>
<dbReference type="PDB" id="8T3D">
    <property type="method" value="EM"/>
    <property type="resolution" value="2.95 A"/>
    <property type="chains" value="Ak=1-78"/>
</dbReference>
<dbReference type="PDB" id="8T3E">
    <property type="method" value="EM"/>
    <property type="resolution" value="3.04 A"/>
    <property type="chains" value="Ak=1-78"/>
</dbReference>
<dbReference type="PDB" id="8T3F">
    <property type="method" value="EM"/>
    <property type="resolution" value="3.09 A"/>
    <property type="chains" value="Ak=1-78"/>
</dbReference>
<dbReference type="PDB" id="8UT0">
    <property type="method" value="EM"/>
    <property type="resolution" value="3.22 A"/>
    <property type="chains" value="Lm=2-78"/>
</dbReference>
<dbReference type="PDB" id="8UTI">
    <property type="method" value="EM"/>
    <property type="resolution" value="3.13 A"/>
    <property type="chains" value="Lm=2-78"/>
</dbReference>
<dbReference type="PDB" id="8V87">
    <property type="method" value="EM"/>
    <property type="resolution" value="2.66 A"/>
    <property type="chains" value="k=1-78"/>
</dbReference>
<dbReference type="PDB" id="8XU8">
    <property type="method" value="EM"/>
    <property type="resolution" value="3.40 A"/>
    <property type="chains" value="m=2-78"/>
</dbReference>
<dbReference type="PDB" id="8Y0U">
    <property type="method" value="EM"/>
    <property type="resolution" value="3.59 A"/>
    <property type="chains" value="Lk=1-78"/>
</dbReference>
<dbReference type="PDB" id="8YLD">
    <property type="method" value="EM"/>
    <property type="resolution" value="3.90 A"/>
    <property type="chains" value="m=2-78"/>
</dbReference>
<dbReference type="PDB" id="8YLR">
    <property type="method" value="EM"/>
    <property type="resolution" value="3.90 A"/>
    <property type="chains" value="m=2-78"/>
</dbReference>
<dbReference type="PDB" id="8Z70">
    <property type="method" value="EM"/>
    <property type="resolution" value="3.20 A"/>
    <property type="chains" value="m=2-78"/>
</dbReference>
<dbReference type="PDB" id="8Z71">
    <property type="method" value="EM"/>
    <property type="resolution" value="3.60 A"/>
    <property type="chains" value="m=2-78"/>
</dbReference>
<dbReference type="PDB" id="9F9S">
    <property type="method" value="EM"/>
    <property type="resolution" value="2.90 A"/>
    <property type="chains" value="Lg/Mg=1-78"/>
</dbReference>
<dbReference type="PDBsum" id="3J6X"/>
<dbReference type="PDBsum" id="3J6Y"/>
<dbReference type="PDBsum" id="3J77"/>
<dbReference type="PDBsum" id="3J78"/>
<dbReference type="PDBsum" id="3JCT"/>
<dbReference type="PDBsum" id="4U3M"/>
<dbReference type="PDBsum" id="4U3N"/>
<dbReference type="PDBsum" id="4U3U"/>
<dbReference type="PDBsum" id="4U4N"/>
<dbReference type="PDBsum" id="4U4O"/>
<dbReference type="PDBsum" id="4U4Q"/>
<dbReference type="PDBsum" id="4U4R"/>
<dbReference type="PDBsum" id="4U4U"/>
<dbReference type="PDBsum" id="4U4Y"/>
<dbReference type="PDBsum" id="4U4Z"/>
<dbReference type="PDBsum" id="4U50"/>
<dbReference type="PDBsum" id="4U51"/>
<dbReference type="PDBsum" id="4U52"/>
<dbReference type="PDBsum" id="4U53"/>
<dbReference type="PDBsum" id="4U55"/>
<dbReference type="PDBsum" id="4U56"/>
<dbReference type="PDBsum" id="4U6F"/>
<dbReference type="PDBsum" id="4V6I"/>
<dbReference type="PDBsum" id="4V7F"/>
<dbReference type="PDBsum" id="4V88"/>
<dbReference type="PDBsum" id="4V8T"/>
<dbReference type="PDBsum" id="4V8Y"/>
<dbReference type="PDBsum" id="4V8Z"/>
<dbReference type="PDBsum" id="4V91"/>
<dbReference type="PDBsum" id="5APN"/>
<dbReference type="PDBsum" id="5APO"/>
<dbReference type="PDBsum" id="5DAT"/>
<dbReference type="PDBsum" id="5DC3"/>
<dbReference type="PDBsum" id="5DGE"/>
<dbReference type="PDBsum" id="5DGF"/>
<dbReference type="PDBsum" id="5DGV"/>
<dbReference type="PDBsum" id="5FCI"/>
<dbReference type="PDBsum" id="5FCJ"/>
<dbReference type="PDBsum" id="5GAK"/>
<dbReference type="PDBsum" id="5H4P"/>
<dbReference type="PDBsum" id="5I4L"/>
<dbReference type="PDBsum" id="5JCS"/>
<dbReference type="PDBsum" id="5JUO"/>
<dbReference type="PDBsum" id="5JUP"/>
<dbReference type="PDBsum" id="5JUS"/>
<dbReference type="PDBsum" id="5JUT"/>
<dbReference type="PDBsum" id="5JUU"/>
<dbReference type="PDBsum" id="5LYB"/>
<dbReference type="PDBsum" id="5M1J"/>
<dbReference type="PDBsum" id="5MC6"/>
<dbReference type="PDBsum" id="5MEI"/>
<dbReference type="PDBsum" id="5NDG"/>
<dbReference type="PDBsum" id="5NDV"/>
<dbReference type="PDBsum" id="5NDW"/>
<dbReference type="PDBsum" id="5OBM"/>
<dbReference type="PDBsum" id="5ON6"/>
<dbReference type="PDBsum" id="5T62"/>
<dbReference type="PDBsum" id="5T6R"/>
<dbReference type="PDBsum" id="5TBW"/>
<dbReference type="PDBsum" id="5TGA"/>
<dbReference type="PDBsum" id="5TGM"/>
<dbReference type="PDBsum" id="6CB1"/>
<dbReference type="PDBsum" id="6ELZ"/>
<dbReference type="PDBsum" id="6EM5"/>
<dbReference type="PDBsum" id="6FT6"/>
<dbReference type="PDBsum" id="6GQ1"/>
<dbReference type="PDBsum" id="6GQB"/>
<dbReference type="PDBsum" id="6GQV"/>
<dbReference type="PDBsum" id="6HD7"/>
<dbReference type="PDBsum" id="6HHQ"/>
<dbReference type="PDBsum" id="6I7O"/>
<dbReference type="PDBsum" id="6M62"/>
<dbReference type="PDBsum" id="6N8J"/>
<dbReference type="PDBsum" id="6N8K"/>
<dbReference type="PDBsum" id="6N8L"/>
<dbReference type="PDBsum" id="6N8M"/>
<dbReference type="PDBsum" id="6N8N"/>
<dbReference type="PDBsum" id="6N8O"/>
<dbReference type="PDBsum" id="6OIG"/>
<dbReference type="PDBsum" id="6Q8Y"/>
<dbReference type="PDBsum" id="6QIK"/>
<dbReference type="PDBsum" id="6QT0"/>
<dbReference type="PDBsum" id="6QTZ"/>
<dbReference type="PDBsum" id="6R84"/>
<dbReference type="PDBsum" id="6R86"/>
<dbReference type="PDBsum" id="6R87"/>
<dbReference type="PDBsum" id="6RI5"/>
<dbReference type="PDBsum" id="6RZZ"/>
<dbReference type="PDBsum" id="6S05"/>
<dbReference type="PDBsum" id="6S47"/>
<dbReference type="PDBsum" id="6SNT"/>
<dbReference type="PDBsum" id="6SV4"/>
<dbReference type="PDBsum" id="6T4Q"/>
<dbReference type="PDBsum" id="6T7I"/>
<dbReference type="PDBsum" id="6T7T"/>
<dbReference type="PDBsum" id="6T83"/>
<dbReference type="PDBsum" id="6TB3"/>
<dbReference type="PDBsum" id="6TNU"/>
<dbReference type="PDBsum" id="6WOO"/>
<dbReference type="PDBsum" id="6YLG"/>
<dbReference type="PDBsum" id="6YLH"/>
<dbReference type="PDBsum" id="6YLX"/>
<dbReference type="PDBsum" id="6YLY"/>
<dbReference type="PDBsum" id="6Z6J"/>
<dbReference type="PDBsum" id="6Z6K"/>
<dbReference type="PDBsum" id="7AZY"/>
<dbReference type="PDBsum" id="7B7D"/>
<dbReference type="PDBsum" id="7BT6"/>
<dbReference type="PDBsum" id="7BTB"/>
<dbReference type="PDBsum" id="7MPI"/>
<dbReference type="PDBsum" id="7MPJ"/>
<dbReference type="PDBsum" id="7N8B"/>
<dbReference type="PDBsum" id="7NAC"/>
<dbReference type="PDBsum" id="7NAD"/>
<dbReference type="PDBsum" id="7NRC"/>
<dbReference type="PDBsum" id="7NRD"/>
<dbReference type="PDBsum" id="7OF1"/>
<dbReference type="PDBsum" id="7OH3"/>
<dbReference type="PDBsum" id="7OHQ"/>
<dbReference type="PDBsum" id="7OHR"/>
<dbReference type="PDBsum" id="7OHV"/>
<dbReference type="PDBsum" id="7R72"/>
<dbReference type="PDBsum" id="7R7A"/>
<dbReference type="PDBsum" id="7U0H"/>
<dbReference type="PDBsum" id="7UG6"/>
<dbReference type="PDBsum" id="7UOO"/>
<dbReference type="PDBsum" id="7UQB"/>
<dbReference type="PDBsum" id="7UQZ"/>
<dbReference type="PDBsum" id="7V08"/>
<dbReference type="PDBsum" id="7Z34"/>
<dbReference type="PDBsum" id="7ZPQ"/>
<dbReference type="PDBsum" id="7ZRS"/>
<dbReference type="PDBsum" id="7ZS5"/>
<dbReference type="PDBsum" id="7ZUW"/>
<dbReference type="PDBsum" id="7ZUX"/>
<dbReference type="PDBsum" id="7ZW0"/>
<dbReference type="PDBsum" id="8AAF"/>
<dbReference type="PDBsum" id="8AGT"/>
<dbReference type="PDBsum" id="8AGU"/>
<dbReference type="PDBsum" id="8AGV"/>
<dbReference type="PDBsum" id="8AGW"/>
<dbReference type="PDBsum" id="8AGX"/>
<dbReference type="PDBsum" id="8AGZ"/>
<dbReference type="PDBsum" id="8BIP"/>
<dbReference type="PDBsum" id="8BJQ"/>
<dbReference type="PDBsum" id="8BN3"/>
<dbReference type="PDBsum" id="8BQD"/>
<dbReference type="PDBsum" id="8BQX"/>
<dbReference type="PDBsum" id="8CCS"/>
<dbReference type="PDBsum" id="8CDL"/>
<dbReference type="PDBsum" id="8CDR"/>
<dbReference type="PDBsum" id="8CEH"/>
<dbReference type="PDBsum" id="8CF5"/>
<dbReference type="PDBsum" id="8CG8"/>
<dbReference type="PDBsum" id="8CGN"/>
<dbReference type="PDBsum" id="8CIV"/>
<dbReference type="PDBsum" id="8CKU"/>
<dbReference type="PDBsum" id="8CMJ"/>
<dbReference type="PDBsum" id="8HFR"/>
<dbReference type="PDBsum" id="8K2D"/>
<dbReference type="PDBsum" id="8K82"/>
<dbReference type="PDBsum" id="8P4V"/>
<dbReference type="PDBsum" id="8P8M"/>
<dbReference type="PDBsum" id="8P8N"/>
<dbReference type="PDBsum" id="8P8U"/>
<dbReference type="PDBsum" id="8P9A"/>
<dbReference type="PDBsum" id="8PFR"/>
<dbReference type="PDBsum" id="8T2X"/>
<dbReference type="PDBsum" id="8T2Y"/>
<dbReference type="PDBsum" id="8T2Z"/>
<dbReference type="PDBsum" id="8T30"/>
<dbReference type="PDBsum" id="8T3A"/>
<dbReference type="PDBsum" id="8T3B"/>
<dbReference type="PDBsum" id="8T3C"/>
<dbReference type="PDBsum" id="8T3D"/>
<dbReference type="PDBsum" id="8T3E"/>
<dbReference type="PDBsum" id="8T3F"/>
<dbReference type="PDBsum" id="8UT0"/>
<dbReference type="PDBsum" id="8UTI"/>
<dbReference type="PDBsum" id="8V87"/>
<dbReference type="PDBsum" id="8XU8"/>
<dbReference type="PDBsum" id="8Y0U"/>
<dbReference type="PDBsum" id="8YLD"/>
<dbReference type="PDBsum" id="8YLR"/>
<dbReference type="PDBsum" id="8Z70"/>
<dbReference type="PDBsum" id="8Z71"/>
<dbReference type="PDBsum" id="9F9S"/>
<dbReference type="EMDB" id="EMD-0047"/>
<dbReference type="EMDB" id="EMD-0048"/>
<dbReference type="EMDB" id="EMD-0049"/>
<dbReference type="EMDB" id="EMD-0202"/>
<dbReference type="EMDB" id="EMD-0369"/>
<dbReference type="EMDB" id="EMD-0370"/>
<dbReference type="EMDB" id="EMD-0371"/>
<dbReference type="EMDB" id="EMD-0372"/>
<dbReference type="EMDB" id="EMD-0373"/>
<dbReference type="EMDB" id="EMD-0374"/>
<dbReference type="EMDB" id="EMD-10068"/>
<dbReference type="EMDB" id="EMD-10071"/>
<dbReference type="EMDB" id="EMD-10098"/>
<dbReference type="EMDB" id="EMD-10262"/>
<dbReference type="EMDB" id="EMD-10315"/>
<dbReference type="EMDB" id="EMD-10377"/>
<dbReference type="EMDB" id="EMD-10396"/>
<dbReference type="EMDB" id="EMD-10397"/>
<dbReference type="EMDB" id="EMD-10398"/>
<dbReference type="EMDB" id="EMD-10431"/>
<dbReference type="EMDB" id="EMD-10537"/>
<dbReference type="EMDB" id="EMD-10838"/>
<dbReference type="EMDB" id="EMD-10839"/>
<dbReference type="EMDB" id="EMD-10841"/>
<dbReference type="EMDB" id="EMD-10842"/>
<dbReference type="EMDB" id="EMD-11096"/>
<dbReference type="EMDB" id="EMD-11097"/>
<dbReference type="EMDB" id="EMD-11951"/>
<dbReference type="EMDB" id="EMD-12081"/>
<dbReference type="EMDB" id="EMD-12534"/>
<dbReference type="EMDB" id="EMD-12535"/>
<dbReference type="EMDB" id="EMD-12866"/>
<dbReference type="EMDB" id="EMD-12892"/>
<dbReference type="EMDB" id="EMD-12905"/>
<dbReference type="EMDB" id="EMD-12906"/>
<dbReference type="EMDB" id="EMD-12910"/>
<dbReference type="EMDB" id="EMD-14471"/>
<dbReference type="EMDB" id="EMD-14926"/>
<dbReference type="EMDB" id="EMD-14979"/>
<dbReference type="EMDB" id="EMD-14990"/>
<dbReference type="EMDB" id="EMD-15296"/>
<dbReference type="EMDB" id="EMD-15423"/>
<dbReference type="EMDB" id="EMD-15425"/>
<dbReference type="EMDB" id="EMD-15426"/>
<dbReference type="EMDB" id="EMD-15427"/>
<dbReference type="EMDB" id="EMD-15428"/>
<dbReference type="EMDB" id="EMD-16086"/>
<dbReference type="EMDB" id="EMD-16090"/>
<dbReference type="EMDB" id="EMD-16563"/>
<dbReference type="EMDB" id="EMD-16591"/>
<dbReference type="EMDB" id="EMD-16594"/>
<dbReference type="EMDB" id="EMD-16609"/>
<dbReference type="EMDB" id="EMD-16616"/>
<dbReference type="EMDB" id="EMD-16634"/>
<dbReference type="EMDB" id="EMD-16648"/>
<dbReference type="EMDB" id="EMD-16684"/>
<dbReference type="EMDB" id="EMD-16702"/>
<dbReference type="EMDB" id="EMD-16729"/>
<dbReference type="EMDB" id="EMD-17549"/>
<dbReference type="EMDB" id="EMD-17550"/>
<dbReference type="EMDB" id="EMD-17552"/>
<dbReference type="EMDB" id="EMD-17653"/>
<dbReference type="EMDB" id="EMD-20077"/>
<dbReference type="EMDB" id="EMD-21859"/>
<dbReference type="EMDB" id="EMD-23934"/>
<dbReference type="EMDB" id="EMD-23935"/>
<dbReference type="EMDB" id="EMD-24235"/>
<dbReference type="EMDB" id="EMD-24269"/>
<dbReference type="EMDB" id="EMD-24290"/>
<dbReference type="EMDB" id="EMD-24296"/>
<dbReference type="EMDB" id="EMD-26259"/>
<dbReference type="EMDB" id="EMD-26485"/>
<dbReference type="EMDB" id="EMD-26651"/>
<dbReference type="EMDB" id="EMD-26686"/>
<dbReference type="EMDB" id="EMD-26703"/>
<dbReference type="EMDB" id="EMD-30108"/>
<dbReference type="EMDB" id="EMD-30170"/>
<dbReference type="EMDB" id="EMD-30174"/>
<dbReference type="EMDB" id="EMD-3461"/>
<dbReference type="EMDB" id="EMD-34725"/>
<dbReference type="EMDB" id="EMD-36839"/>
<dbReference type="EMDB" id="EMD-36945"/>
<dbReference type="EMDB" id="EMD-38660"/>
<dbReference type="EMDB" id="EMD-4140"/>
<dbReference type="EMDB" id="EMD-42525"/>
<dbReference type="EMDB" id="EMD-42540"/>
<dbReference type="EMDB" id="EMD-4302"/>
<dbReference type="EMDB" id="EMD-43027"/>
<dbReference type="EMDB" id="EMD-4427"/>
<dbReference type="EMDB" id="EMD-4474"/>
<dbReference type="EMDB" id="EMD-4560"/>
<dbReference type="EMDB" id="EMD-4630"/>
<dbReference type="EMDB" id="EMD-4636"/>
<dbReference type="EMDB" id="EMD-4751"/>
<dbReference type="EMDB" id="EMD-4752"/>
<dbReference type="EMDB" id="EMD-4753"/>
<dbReference type="EMDB" id="EMD-4884"/>
<dbReference type="EMDB" id="EMD-50259"/>
<dbReference type="EMDB" id="EMD-8362"/>
<dbReference type="EMDB" id="EMD-8368"/>
<dbReference type="SMR" id="P49167"/>
<dbReference type="BioGRID" id="31588">
    <property type="interactions" value="297"/>
</dbReference>
<dbReference type="ComplexPortal" id="CPX-1601">
    <property type="entry name" value="60S cytosolic large ribosomal subunit"/>
</dbReference>
<dbReference type="DIP" id="DIP-3950N"/>
<dbReference type="FunCoup" id="P49167">
    <property type="interactions" value="1105"/>
</dbReference>
<dbReference type="IntAct" id="P49167">
    <property type="interactions" value="95"/>
</dbReference>
<dbReference type="MINT" id="P49167"/>
<dbReference type="STRING" id="4932.YLR325C"/>
<dbReference type="iPTMnet" id="P49167"/>
<dbReference type="PaxDb" id="4932-YLR325C"/>
<dbReference type="PeptideAtlas" id="P49167"/>
<dbReference type="TopDownProteomics" id="P49167"/>
<dbReference type="EnsemblFungi" id="YLR325C_mRNA">
    <property type="protein sequence ID" value="YLR325C"/>
    <property type="gene ID" value="YLR325C"/>
</dbReference>
<dbReference type="GeneID" id="851035"/>
<dbReference type="KEGG" id="sce:YLR325C"/>
<dbReference type="AGR" id="SGD:S000004317"/>
<dbReference type="SGD" id="S000004317">
    <property type="gene designation" value="RPL38"/>
</dbReference>
<dbReference type="VEuPathDB" id="FungiDB:YLR325C"/>
<dbReference type="eggNOG" id="KOG3499">
    <property type="taxonomic scope" value="Eukaryota"/>
</dbReference>
<dbReference type="GeneTree" id="ENSGT00390000003718"/>
<dbReference type="HOGENOM" id="CLU_152057_1_0_1"/>
<dbReference type="InParanoid" id="P49167"/>
<dbReference type="OMA" id="MPKQIHD"/>
<dbReference type="OrthoDB" id="10250488at2759"/>
<dbReference type="BioCyc" id="YEAST:G3O-32408-MONOMER"/>
<dbReference type="Reactome" id="R-SCE-156827">
    <property type="pathway name" value="L13a-mediated translational silencing of Ceruloplasmin expression"/>
</dbReference>
<dbReference type="Reactome" id="R-SCE-1799339">
    <property type="pathway name" value="SRP-dependent cotranslational protein targeting to membrane"/>
</dbReference>
<dbReference type="Reactome" id="R-SCE-72689">
    <property type="pathway name" value="Formation of a pool of free 40S subunits"/>
</dbReference>
<dbReference type="Reactome" id="R-SCE-72706">
    <property type="pathway name" value="GTP hydrolysis and joining of the 60S ribosomal subunit"/>
</dbReference>
<dbReference type="Reactome" id="R-SCE-975956">
    <property type="pathway name" value="Nonsense Mediated Decay (NMD) independent of the Exon Junction Complex (EJC)"/>
</dbReference>
<dbReference type="Reactome" id="R-SCE-975957">
    <property type="pathway name" value="Nonsense Mediated Decay (NMD) enhanced by the Exon Junction Complex (EJC)"/>
</dbReference>
<dbReference type="BioGRID-ORCS" id="851035">
    <property type="hits" value="1 hit in 10 CRISPR screens"/>
</dbReference>
<dbReference type="PRO" id="PR:P49167"/>
<dbReference type="Proteomes" id="UP000002311">
    <property type="component" value="Chromosome XII"/>
</dbReference>
<dbReference type="RNAct" id="P49167">
    <property type="molecule type" value="protein"/>
</dbReference>
<dbReference type="GO" id="GO:0005737">
    <property type="term" value="C:cytoplasm"/>
    <property type="evidence" value="ECO:0000303"/>
    <property type="project" value="ComplexPortal"/>
</dbReference>
<dbReference type="GO" id="GO:0005829">
    <property type="term" value="C:cytosol"/>
    <property type="evidence" value="ECO:0000304"/>
    <property type="project" value="Reactome"/>
</dbReference>
<dbReference type="GO" id="GO:0022625">
    <property type="term" value="C:cytosolic large ribosomal subunit"/>
    <property type="evidence" value="ECO:0000314"/>
    <property type="project" value="SGD"/>
</dbReference>
<dbReference type="GO" id="GO:0003735">
    <property type="term" value="F:structural constituent of ribosome"/>
    <property type="evidence" value="ECO:0000318"/>
    <property type="project" value="GO_Central"/>
</dbReference>
<dbReference type="GO" id="GO:0002181">
    <property type="term" value="P:cytoplasmic translation"/>
    <property type="evidence" value="ECO:0000303"/>
    <property type="project" value="ComplexPortal"/>
</dbReference>
<dbReference type="GO" id="GO:0022618">
    <property type="term" value="P:protein-RNA complex assembly"/>
    <property type="evidence" value="ECO:0000318"/>
    <property type="project" value="GO_Central"/>
</dbReference>
<dbReference type="FunFam" id="3.30.720.90:FF:000002">
    <property type="entry name" value="60S ribosomal proteins L38"/>
    <property type="match status" value="1"/>
</dbReference>
<dbReference type="Gene3D" id="3.30.720.90">
    <property type="match status" value="1"/>
</dbReference>
<dbReference type="InterPro" id="IPR002675">
    <property type="entry name" value="Ribosomal_eL38"/>
</dbReference>
<dbReference type="InterPro" id="IPR038464">
    <property type="entry name" value="Ribosomal_eL38_sf"/>
</dbReference>
<dbReference type="PANTHER" id="PTHR10965">
    <property type="entry name" value="60S RIBOSOMAL PROTEIN L38"/>
    <property type="match status" value="1"/>
</dbReference>
<dbReference type="PANTHER" id="PTHR10965:SF0">
    <property type="entry name" value="LARGE RIBOSOMAL SUBUNIT PROTEIN EL38"/>
    <property type="match status" value="1"/>
</dbReference>
<dbReference type="Pfam" id="PF01781">
    <property type="entry name" value="Ribosomal_L38e"/>
    <property type="match status" value="1"/>
</dbReference>
<name>RL38_YEAST</name>
<reference key="1">
    <citation type="journal article" date="1997" name="Nature">
        <title>The nucleotide sequence of Saccharomyces cerevisiae chromosome XII.</title>
        <authorList>
            <person name="Johnston M."/>
            <person name="Hillier L.W."/>
            <person name="Riles L."/>
            <person name="Albermann K."/>
            <person name="Andre B."/>
            <person name="Ansorge W."/>
            <person name="Benes V."/>
            <person name="Brueckner M."/>
            <person name="Delius H."/>
            <person name="Dubois E."/>
            <person name="Duesterhoeft A."/>
            <person name="Entian K.-D."/>
            <person name="Floeth M."/>
            <person name="Goffeau A."/>
            <person name="Hebling U."/>
            <person name="Heumann K."/>
            <person name="Heuss-Neitzel D."/>
            <person name="Hilbert H."/>
            <person name="Hilger F."/>
            <person name="Kleine K."/>
            <person name="Koetter P."/>
            <person name="Louis E.J."/>
            <person name="Messenguy F."/>
            <person name="Mewes H.-W."/>
            <person name="Miosga T."/>
            <person name="Moestl D."/>
            <person name="Mueller-Auer S."/>
            <person name="Nentwich U."/>
            <person name="Obermaier B."/>
            <person name="Piravandi E."/>
            <person name="Pohl T.M."/>
            <person name="Portetelle D."/>
            <person name="Purnelle B."/>
            <person name="Rechmann S."/>
            <person name="Rieger M."/>
            <person name="Rinke M."/>
            <person name="Rose M."/>
            <person name="Scharfe M."/>
            <person name="Scherens B."/>
            <person name="Scholler P."/>
            <person name="Schwager C."/>
            <person name="Schwarz S."/>
            <person name="Underwood A.P."/>
            <person name="Urrestarazu L.A."/>
            <person name="Vandenbol M."/>
            <person name="Verhasselt P."/>
            <person name="Vierendeels F."/>
            <person name="Voet M."/>
            <person name="Volckaert G."/>
            <person name="Voss H."/>
            <person name="Wambutt R."/>
            <person name="Wedler E."/>
            <person name="Wedler H."/>
            <person name="Zimmermann F.K."/>
            <person name="Zollner A."/>
            <person name="Hani J."/>
            <person name="Hoheisel J.D."/>
        </authorList>
    </citation>
    <scope>NUCLEOTIDE SEQUENCE [LARGE SCALE GENOMIC DNA]</scope>
    <source>
        <strain>ATCC 204508 / S288c</strain>
    </source>
</reference>
<reference key="2">
    <citation type="journal article" date="2014" name="G3 (Bethesda)">
        <title>The reference genome sequence of Saccharomyces cerevisiae: Then and now.</title>
        <authorList>
            <person name="Engel S.R."/>
            <person name="Dietrich F.S."/>
            <person name="Fisk D.G."/>
            <person name="Binkley G."/>
            <person name="Balakrishnan R."/>
            <person name="Costanzo M.C."/>
            <person name="Dwight S.S."/>
            <person name="Hitz B.C."/>
            <person name="Karra K."/>
            <person name="Nash R.S."/>
            <person name="Weng S."/>
            <person name="Wong E.D."/>
            <person name="Lloyd P."/>
            <person name="Skrzypek M.S."/>
            <person name="Miyasato S.R."/>
            <person name="Simison M."/>
            <person name="Cherry J.M."/>
        </authorList>
    </citation>
    <scope>GENOME REANNOTATION</scope>
    <source>
        <strain>ATCC 204508 / S288c</strain>
    </source>
</reference>
<reference key="3">
    <citation type="journal article" date="1998" name="Yeast">
        <title>The list of cytoplasmic ribosomal proteins of Saccharomyces cerevisiae.</title>
        <authorList>
            <person name="Planta R.J."/>
            <person name="Mager W.H."/>
        </authorList>
    </citation>
    <scope>NOMENCLATURE</scope>
    <scope>SUBUNIT</scope>
</reference>
<reference key="4">
    <citation type="journal article" date="1999" name="J. Biol. Chem.">
        <title>The action of N-terminal acetyltransferases on yeast ribosomal proteins.</title>
        <authorList>
            <person name="Arnold R.J."/>
            <person name="Polevoda B."/>
            <person name="Reilly J.P."/>
            <person name="Sherman F."/>
        </authorList>
    </citation>
    <scope>CLEAVAGE OF INITIATOR METHIONINE</scope>
</reference>
<reference key="5">
    <citation type="journal article" date="2003" name="Nature">
        <title>Global analysis of protein localization in budding yeast.</title>
        <authorList>
            <person name="Huh W.-K."/>
            <person name="Falvo J.V."/>
            <person name="Gerke L.C."/>
            <person name="Carroll A.S."/>
            <person name="Howson R.W."/>
            <person name="Weissman J.S."/>
            <person name="O'Shea E.K."/>
        </authorList>
    </citation>
    <scope>SUBCELLULAR LOCATION [LARGE SCALE ANALYSIS]</scope>
</reference>
<reference key="6">
    <citation type="journal article" date="2003" name="Nature">
        <title>Global analysis of protein expression in yeast.</title>
        <authorList>
            <person name="Ghaemmaghami S."/>
            <person name="Huh W.-K."/>
            <person name="Bower K."/>
            <person name="Howson R.W."/>
            <person name="Belle A."/>
            <person name="Dephoure N."/>
            <person name="O'Shea E.K."/>
            <person name="Weissman J.S."/>
        </authorList>
    </citation>
    <scope>LEVEL OF PROTEIN EXPRESSION [LARGE SCALE ANALYSIS]</scope>
</reference>
<reference key="7">
    <citation type="journal article" date="2005" name="Mol. Cell. Proteomics">
        <title>Quantitative phosphoproteomics applied to the yeast pheromone signaling pathway.</title>
        <authorList>
            <person name="Gruhler A."/>
            <person name="Olsen J.V."/>
            <person name="Mohammed S."/>
            <person name="Mortensen P."/>
            <person name="Faergeman N.J."/>
            <person name="Mann M."/>
            <person name="Jensen O.N."/>
        </authorList>
    </citation>
    <scope>IDENTIFICATION BY MASS SPECTROMETRY [LARGE SCALE ANALYSIS]</scope>
    <source>
        <strain>YAL6B</strain>
    </source>
</reference>
<reference key="8">
    <citation type="journal article" date="2008" name="Mol. Cell. Proteomics">
        <title>A multidimensional chromatography technology for in-depth phosphoproteome analysis.</title>
        <authorList>
            <person name="Albuquerque C.P."/>
            <person name="Smolka M.B."/>
            <person name="Payne S.H."/>
            <person name="Bafna V."/>
            <person name="Eng J."/>
            <person name="Zhou H."/>
        </authorList>
    </citation>
    <scope>IDENTIFICATION BY MASS SPECTROMETRY [LARGE SCALE ANALYSIS]</scope>
</reference>
<reference key="9">
    <citation type="journal article" date="2009" name="Science">
        <title>Global analysis of Cdk1 substrate phosphorylation sites provides insights into evolution.</title>
        <authorList>
            <person name="Holt L.J."/>
            <person name="Tuch B.B."/>
            <person name="Villen J."/>
            <person name="Johnson A.D."/>
            <person name="Gygi S.P."/>
            <person name="Morgan D.O."/>
        </authorList>
    </citation>
    <scope>IDENTIFICATION BY MASS SPECTROMETRY [LARGE SCALE ANALYSIS]</scope>
</reference>
<reference key="10">
    <citation type="journal article" date="2014" name="Curr. Opin. Struct. Biol.">
        <title>A new system for naming ribosomal proteins.</title>
        <authorList>
            <person name="Ban N."/>
            <person name="Beckmann R."/>
            <person name="Cate J.H.D."/>
            <person name="Dinman J.D."/>
            <person name="Dragon F."/>
            <person name="Ellis S.R."/>
            <person name="Lafontaine D.L.J."/>
            <person name="Lindahl L."/>
            <person name="Liljas A."/>
            <person name="Lipton J.M."/>
            <person name="McAlear M.A."/>
            <person name="Moore P.B."/>
            <person name="Noller H.F."/>
            <person name="Ortega J."/>
            <person name="Panse V.G."/>
            <person name="Ramakrishnan V."/>
            <person name="Spahn C.M.T."/>
            <person name="Steitz T.A."/>
            <person name="Tchorzewski M."/>
            <person name="Tollervey D."/>
            <person name="Warren A.J."/>
            <person name="Williamson J.R."/>
            <person name="Wilson D."/>
            <person name="Yonath A."/>
            <person name="Yusupov M."/>
        </authorList>
    </citation>
    <scope>NOMENCLATURE</scope>
</reference>
<reference key="11">
    <citation type="journal article" date="2010" name="Science">
        <title>Crystal structure of the eukaryotic ribosome.</title>
        <authorList>
            <person name="Ben-Shem A."/>
            <person name="Jenner L."/>
            <person name="Yusupova G."/>
            <person name="Yusupov M."/>
        </authorList>
    </citation>
    <scope>X-RAY CRYSTALLOGRAPHY (4.0 ANGSTROMS) OF 80S RIBOSOME</scope>
</reference>
<reference key="12">
    <citation type="journal article" date="2011" name="Science">
        <title>The structure of the eukaryotic ribosome at 3.0 A resolution.</title>
        <authorList>
            <person name="Ben-Shem A."/>
            <person name="Garreau de Loubresse N."/>
            <person name="Melnikov S."/>
            <person name="Jenner L."/>
            <person name="Yusupova G."/>
            <person name="Yusupov M."/>
        </authorList>
    </citation>
    <scope>X-RAY CRYSTALLOGRAPHY (3.0 ANGSTROMS) OF 80S RIBOSOME</scope>
    <scope>SUBUNIT</scope>
    <scope>SUBCELLULAR LOCATION</scope>
</reference>
<organism>
    <name type="scientific">Saccharomyces cerevisiae (strain ATCC 204508 / S288c)</name>
    <name type="common">Baker's yeast</name>
    <dbReference type="NCBI Taxonomy" id="559292"/>
    <lineage>
        <taxon>Eukaryota</taxon>
        <taxon>Fungi</taxon>
        <taxon>Dikarya</taxon>
        <taxon>Ascomycota</taxon>
        <taxon>Saccharomycotina</taxon>
        <taxon>Saccharomycetes</taxon>
        <taxon>Saccharomycetales</taxon>
        <taxon>Saccharomycetaceae</taxon>
        <taxon>Saccharomyces</taxon>
    </lineage>
</organism>
<evidence type="ECO:0000269" key="1">
    <source>
    </source>
</evidence>
<evidence type="ECO:0000269" key="2">
    <source>
    </source>
</evidence>
<evidence type="ECO:0000269" key="3">
    <source>
    </source>
</evidence>
<evidence type="ECO:0000269" key="4">
    <source>
    </source>
</evidence>
<evidence type="ECO:0000303" key="5">
    <source>
    </source>
</evidence>
<evidence type="ECO:0000303" key="6">
    <source>
    </source>
</evidence>
<evidence type="ECO:0000305" key="7"/>
<evidence type="ECO:0000305" key="8">
    <source>
    </source>
</evidence>
<evidence type="ECO:0000305" key="9">
    <source>
    </source>
</evidence>
<evidence type="ECO:0007829" key="10">
    <source>
        <dbReference type="PDB" id="7NAD"/>
    </source>
</evidence>
<evidence type="ECO:0007829" key="11">
    <source>
        <dbReference type="PDB" id="7R72"/>
    </source>
</evidence>
<feature type="initiator methionine" description="Removed" evidence="1">
    <location>
        <position position="1"/>
    </location>
</feature>
<feature type="chain" id="PRO_0000215445" description="Large ribosomal subunit protein eL38">
    <location>
        <begin position="2"/>
        <end position="78"/>
    </location>
</feature>
<feature type="strand" evidence="11">
    <location>
        <begin position="3"/>
        <end position="5"/>
    </location>
</feature>
<feature type="helix" evidence="10">
    <location>
        <begin position="8"/>
        <end position="15"/>
    </location>
</feature>
<feature type="strand" evidence="10">
    <location>
        <begin position="17"/>
        <end position="19"/>
    </location>
</feature>
<feature type="strand" evidence="10">
    <location>
        <begin position="22"/>
        <end position="31"/>
    </location>
</feature>
<feature type="strand" evidence="10">
    <location>
        <begin position="37"/>
        <end position="46"/>
    </location>
</feature>
<feature type="strand" evidence="10">
    <location>
        <begin position="51"/>
        <end position="56"/>
    </location>
</feature>
<feature type="helix" evidence="10">
    <location>
        <begin position="59"/>
        <end position="68"/>
    </location>
</feature>
<feature type="strand" evidence="10">
    <location>
        <begin position="73"/>
        <end position="77"/>
    </location>
</feature>
<keyword id="KW-0002">3D-structure</keyword>
<keyword id="KW-0963">Cytoplasm</keyword>
<keyword id="KW-1185">Reference proteome</keyword>
<keyword id="KW-0687">Ribonucleoprotein</keyword>
<keyword id="KW-0689">Ribosomal protein</keyword>